<evidence type="ECO:0000255" key="1">
    <source>
        <dbReference type="HAMAP-Rule" id="MF_01309"/>
    </source>
</evidence>
<evidence type="ECO:0000256" key="2">
    <source>
        <dbReference type="SAM" id="MobiDB-lite"/>
    </source>
</evidence>
<evidence type="ECO:0000305" key="3"/>
<gene>
    <name evidence="1" type="primary">rpsC</name>
    <name type="ordered locus">AYWB_516</name>
</gene>
<feature type="chain" id="PRO_0000293752" description="Small ribosomal subunit protein uS3">
    <location>
        <begin position="1"/>
        <end position="252"/>
    </location>
</feature>
<feature type="domain" description="KH type-2" evidence="1">
    <location>
        <begin position="39"/>
        <end position="111"/>
    </location>
</feature>
<feature type="region of interest" description="Disordered" evidence="2">
    <location>
        <begin position="226"/>
        <end position="252"/>
    </location>
</feature>
<protein>
    <recommendedName>
        <fullName evidence="1">Small ribosomal subunit protein uS3</fullName>
    </recommendedName>
    <alternativeName>
        <fullName evidence="3">30S ribosomal protein S3</fullName>
    </alternativeName>
</protein>
<dbReference type="EMBL" id="CP000061">
    <property type="protein sequence ID" value="ABC65633.1"/>
    <property type="molecule type" value="Genomic_DNA"/>
</dbReference>
<dbReference type="RefSeq" id="WP_011412795.1">
    <property type="nucleotide sequence ID" value="NC_007716.1"/>
</dbReference>
<dbReference type="SMR" id="Q2NIW0"/>
<dbReference type="STRING" id="322098.AYWB_516"/>
<dbReference type="KEGG" id="ayw:AYWB_516"/>
<dbReference type="eggNOG" id="COG0092">
    <property type="taxonomic scope" value="Bacteria"/>
</dbReference>
<dbReference type="HOGENOM" id="CLU_058591_0_2_14"/>
<dbReference type="OrthoDB" id="9806396at2"/>
<dbReference type="PhylomeDB" id="Q2NIW0"/>
<dbReference type="Proteomes" id="UP000001934">
    <property type="component" value="Chromosome"/>
</dbReference>
<dbReference type="GO" id="GO:0022627">
    <property type="term" value="C:cytosolic small ribosomal subunit"/>
    <property type="evidence" value="ECO:0007669"/>
    <property type="project" value="TreeGrafter"/>
</dbReference>
<dbReference type="GO" id="GO:0003729">
    <property type="term" value="F:mRNA binding"/>
    <property type="evidence" value="ECO:0007669"/>
    <property type="project" value="UniProtKB-UniRule"/>
</dbReference>
<dbReference type="GO" id="GO:0019843">
    <property type="term" value="F:rRNA binding"/>
    <property type="evidence" value="ECO:0007669"/>
    <property type="project" value="UniProtKB-UniRule"/>
</dbReference>
<dbReference type="GO" id="GO:0003735">
    <property type="term" value="F:structural constituent of ribosome"/>
    <property type="evidence" value="ECO:0007669"/>
    <property type="project" value="InterPro"/>
</dbReference>
<dbReference type="GO" id="GO:0006412">
    <property type="term" value="P:translation"/>
    <property type="evidence" value="ECO:0007669"/>
    <property type="project" value="UniProtKB-UniRule"/>
</dbReference>
<dbReference type="CDD" id="cd02412">
    <property type="entry name" value="KH-II_30S_S3"/>
    <property type="match status" value="1"/>
</dbReference>
<dbReference type="FunFam" id="3.30.300.20:FF:000001">
    <property type="entry name" value="30S ribosomal protein S3"/>
    <property type="match status" value="1"/>
</dbReference>
<dbReference type="Gene3D" id="3.30.300.20">
    <property type="match status" value="1"/>
</dbReference>
<dbReference type="Gene3D" id="3.30.1140.32">
    <property type="entry name" value="Ribosomal protein S3, C-terminal domain"/>
    <property type="match status" value="1"/>
</dbReference>
<dbReference type="HAMAP" id="MF_01309_B">
    <property type="entry name" value="Ribosomal_uS3_B"/>
    <property type="match status" value="1"/>
</dbReference>
<dbReference type="InterPro" id="IPR004087">
    <property type="entry name" value="KH_dom"/>
</dbReference>
<dbReference type="InterPro" id="IPR015946">
    <property type="entry name" value="KH_dom-like_a/b"/>
</dbReference>
<dbReference type="InterPro" id="IPR004044">
    <property type="entry name" value="KH_dom_type_2"/>
</dbReference>
<dbReference type="InterPro" id="IPR009019">
    <property type="entry name" value="KH_sf_prok-type"/>
</dbReference>
<dbReference type="InterPro" id="IPR036419">
    <property type="entry name" value="Ribosomal_S3_C_sf"/>
</dbReference>
<dbReference type="InterPro" id="IPR005704">
    <property type="entry name" value="Ribosomal_uS3_bac-typ"/>
</dbReference>
<dbReference type="InterPro" id="IPR001351">
    <property type="entry name" value="Ribosomal_uS3_C"/>
</dbReference>
<dbReference type="InterPro" id="IPR018280">
    <property type="entry name" value="Ribosomal_uS3_CS"/>
</dbReference>
<dbReference type="NCBIfam" id="TIGR01009">
    <property type="entry name" value="rpsC_bact"/>
    <property type="match status" value="1"/>
</dbReference>
<dbReference type="PANTHER" id="PTHR11760">
    <property type="entry name" value="30S/40S RIBOSOMAL PROTEIN S3"/>
    <property type="match status" value="1"/>
</dbReference>
<dbReference type="PANTHER" id="PTHR11760:SF19">
    <property type="entry name" value="SMALL RIBOSOMAL SUBUNIT PROTEIN US3C"/>
    <property type="match status" value="1"/>
</dbReference>
<dbReference type="Pfam" id="PF07650">
    <property type="entry name" value="KH_2"/>
    <property type="match status" value="1"/>
</dbReference>
<dbReference type="Pfam" id="PF00189">
    <property type="entry name" value="Ribosomal_S3_C"/>
    <property type="match status" value="1"/>
</dbReference>
<dbReference type="SMART" id="SM00322">
    <property type="entry name" value="KH"/>
    <property type="match status" value="1"/>
</dbReference>
<dbReference type="SUPFAM" id="SSF54814">
    <property type="entry name" value="Prokaryotic type KH domain (KH-domain type II)"/>
    <property type="match status" value="1"/>
</dbReference>
<dbReference type="SUPFAM" id="SSF54821">
    <property type="entry name" value="Ribosomal protein S3 C-terminal domain"/>
    <property type="match status" value="1"/>
</dbReference>
<dbReference type="PROSITE" id="PS50823">
    <property type="entry name" value="KH_TYPE_2"/>
    <property type="match status" value="1"/>
</dbReference>
<dbReference type="PROSITE" id="PS00548">
    <property type="entry name" value="RIBOSOMAL_S3"/>
    <property type="match status" value="1"/>
</dbReference>
<sequence>MGQKTNPNGLRLGIIRTWESQWCVNDKEIPNLIKEDFLIRKLINNFAKKSAISQIDIERLKEKNKNRITISVHTAKPGVIIGKDGDTRNKLVAKLKELTQKDVNLNVLEVKNSDKVALLIAQNMAEKLENRMFFRRVQKMAIQKAIKAGAKGVKTLISGRLGGAEIARSEGHAEGRVPLHTLRADIDYAAVEAHTTYGVLGIKVWIFHGEVLPGQTILDTRKLFASQSSNNPNRRPRNFKGGNNNHVNAKKN</sequence>
<accession>Q2NIW0</accession>
<organism>
    <name type="scientific">Aster yellows witches'-broom phytoplasma (strain AYWB)</name>
    <dbReference type="NCBI Taxonomy" id="322098"/>
    <lineage>
        <taxon>Bacteria</taxon>
        <taxon>Bacillati</taxon>
        <taxon>Mycoplasmatota</taxon>
        <taxon>Mollicutes</taxon>
        <taxon>Acholeplasmatales</taxon>
        <taxon>Acholeplasmataceae</taxon>
        <taxon>Candidatus Phytoplasma</taxon>
        <taxon>16SrI (Aster yellows group)</taxon>
    </lineage>
</organism>
<reference key="1">
    <citation type="journal article" date="2006" name="J. Bacteriol.">
        <title>Living with genome instability: the adaptation of phytoplasmas to diverse environments of their insect and plant hosts.</title>
        <authorList>
            <person name="Bai X."/>
            <person name="Zhang J."/>
            <person name="Ewing A."/>
            <person name="Miller S.A."/>
            <person name="Jancso Radek A."/>
            <person name="Shevchenko D.V."/>
            <person name="Tsukerman K."/>
            <person name="Walunas T."/>
            <person name="Lapidus A."/>
            <person name="Campbell J.W."/>
            <person name="Hogenhout S.A."/>
        </authorList>
    </citation>
    <scope>NUCLEOTIDE SEQUENCE [LARGE SCALE GENOMIC DNA]</scope>
    <source>
        <strain>AYWB</strain>
    </source>
</reference>
<keyword id="KW-0687">Ribonucleoprotein</keyword>
<keyword id="KW-0689">Ribosomal protein</keyword>
<keyword id="KW-0694">RNA-binding</keyword>
<keyword id="KW-0699">rRNA-binding</keyword>
<name>RS3_AYWBP</name>
<proteinExistence type="inferred from homology"/>
<comment type="function">
    <text evidence="1">Binds the lower part of the 30S subunit head. Binds mRNA in the 70S ribosome, positioning it for translation.</text>
</comment>
<comment type="subunit">
    <text evidence="1">Part of the 30S ribosomal subunit. Forms a tight complex with proteins S10 and S14.</text>
</comment>
<comment type="similarity">
    <text evidence="1">Belongs to the universal ribosomal protein uS3 family.</text>
</comment>